<feature type="chain" id="PRO_0000168962" description="Protein YdfX">
    <location>
        <begin position="1"/>
        <end position="96"/>
    </location>
</feature>
<dbReference type="EMBL" id="U00096">
    <property type="protein sequence ID" value="AYC08221.1"/>
    <property type="molecule type" value="Genomic_DNA"/>
</dbReference>
<dbReference type="EMBL" id="AP009048">
    <property type="protein sequence ID" value="BAE76474.1"/>
    <property type="molecule type" value="Genomic_DNA"/>
</dbReference>
<dbReference type="PIR" id="C64912">
    <property type="entry name" value="C64912"/>
</dbReference>
<dbReference type="SMR" id="P76165"/>
<dbReference type="BioGRID" id="4260245">
    <property type="interactions" value="134"/>
</dbReference>
<dbReference type="FunCoup" id="P76165">
    <property type="interactions" value="150"/>
</dbReference>
<dbReference type="IntAct" id="P76165">
    <property type="interactions" value="5"/>
</dbReference>
<dbReference type="EnsemblBacteria" id="AYC08221">
    <property type="protein sequence ID" value="AYC08221"/>
    <property type="gene ID" value="b1568"/>
</dbReference>
<dbReference type="KEGG" id="ecj:JW1560"/>
<dbReference type="KEGG" id="ecoc:C3026_09040"/>
<dbReference type="PATRIC" id="fig|1411691.4.peg.695"/>
<dbReference type="EchoBASE" id="EB3597"/>
<dbReference type="eggNOG" id="ENOG50337X7">
    <property type="taxonomic scope" value="Bacteria"/>
</dbReference>
<dbReference type="HOGENOM" id="CLU_157150_0_0_6"/>
<dbReference type="InParanoid" id="P76165"/>
<dbReference type="OMA" id="ITESFWA"/>
<dbReference type="BioCyc" id="EcoCyc:G6835-MONOMER"/>
<dbReference type="PRO" id="PR:P76165"/>
<dbReference type="Proteomes" id="UP000000625">
    <property type="component" value="Chromosome"/>
</dbReference>
<dbReference type="Gene3D" id="1.10.3600.10">
    <property type="entry name" value="Putative bacterial toxin ydaT"/>
    <property type="match status" value="1"/>
</dbReference>
<dbReference type="InterPro" id="IPR037042">
    <property type="entry name" value="YdaT_toxin_sf"/>
</dbReference>
<name>YDFX_ECOLI</name>
<organism>
    <name type="scientific">Escherichia coli (strain K12)</name>
    <dbReference type="NCBI Taxonomy" id="83333"/>
    <lineage>
        <taxon>Bacteria</taxon>
        <taxon>Pseudomonadati</taxon>
        <taxon>Pseudomonadota</taxon>
        <taxon>Gammaproteobacteria</taxon>
        <taxon>Enterobacterales</taxon>
        <taxon>Enterobacteriaceae</taxon>
        <taxon>Escherichia</taxon>
    </lineage>
</organism>
<evidence type="ECO:0000305" key="1"/>
<sequence>MKITPEQAREALDAWICRPGMTQEQATILITEAFWALKERPNIDVQRVTYEGGAIDQRALGVNRVKIFERWKAIDTRDKREKFTALVPAIMEATTG</sequence>
<reference key="1">
    <citation type="journal article" date="1997" name="Science">
        <title>The complete genome sequence of Escherichia coli K-12.</title>
        <authorList>
            <person name="Blattner F.R."/>
            <person name="Plunkett G. III"/>
            <person name="Bloch C.A."/>
            <person name="Perna N.T."/>
            <person name="Burland V."/>
            <person name="Riley M."/>
            <person name="Collado-Vides J."/>
            <person name="Glasner J.D."/>
            <person name="Rode C.K."/>
            <person name="Mayhew G.F."/>
            <person name="Gregor J."/>
            <person name="Davis N.W."/>
            <person name="Kirkpatrick H.A."/>
            <person name="Goeden M.A."/>
            <person name="Rose D.J."/>
            <person name="Mau B."/>
            <person name="Shao Y."/>
        </authorList>
    </citation>
    <scope>NUCLEOTIDE SEQUENCE [LARGE SCALE GENOMIC DNA]</scope>
    <source>
        <strain>K12 / MG1655 / ATCC 47076</strain>
    </source>
</reference>
<reference key="2">
    <citation type="journal article" date="2006" name="Mol. Syst. Biol.">
        <title>Highly accurate genome sequences of Escherichia coli K-12 strains MG1655 and W3110.</title>
        <authorList>
            <person name="Hayashi K."/>
            <person name="Morooka N."/>
            <person name="Yamamoto Y."/>
            <person name="Fujita K."/>
            <person name="Isono K."/>
            <person name="Choi S."/>
            <person name="Ohtsubo E."/>
            <person name="Baba T."/>
            <person name="Wanner B.L."/>
            <person name="Mori H."/>
            <person name="Horiuchi T."/>
        </authorList>
    </citation>
    <scope>NUCLEOTIDE SEQUENCE [LARGE SCALE GENOMIC DNA]</scope>
    <source>
        <strain>K12 / W3110 / ATCC 27325 / DSM 5911</strain>
    </source>
</reference>
<comment type="miscellaneous">
    <text evidence="1">Encoded in the Qin prophage.</text>
</comment>
<comment type="miscellaneous">
    <text evidence="1">May be missing up to 100 C-terminal residues compared to orthologs.</text>
</comment>
<proteinExistence type="predicted"/>
<protein>
    <recommendedName>
        <fullName>Protein YdfX</fullName>
    </recommendedName>
</protein>
<keyword id="KW-1185">Reference proteome</keyword>
<gene>
    <name type="primary">ydfX</name>
    <name type="ordered locus">b1568</name>
    <name type="ordered locus">JW1560</name>
</gene>
<accession>P76165</accession>
<accession>A0A385XMG7</accession>
<accession>Q2MB82</accession>